<keyword id="KW-0963">Cytoplasm</keyword>
<keyword id="KW-0378">Hydrolase</keyword>
<keyword id="KW-0540">Nuclease</keyword>
<keyword id="KW-1185">Reference proteome</keyword>
<keyword id="KW-0690">Ribosome biogenesis</keyword>
<comment type="function">
    <text evidence="1">Could be a nuclease involved in processing of the 5'-end of pre-16S rRNA.</text>
</comment>
<comment type="subcellular location">
    <subcellularLocation>
        <location evidence="1">Cytoplasm</location>
    </subcellularLocation>
</comment>
<comment type="similarity">
    <text evidence="1">Belongs to the YqgF nuclease family.</text>
</comment>
<protein>
    <recommendedName>
        <fullName evidence="1">Putative pre-16S rRNA nuclease</fullName>
        <ecNumber evidence="1">3.1.-.-</ecNumber>
    </recommendedName>
</protein>
<dbReference type="EC" id="3.1.-.-" evidence="1"/>
<dbReference type="EMBL" id="AE001437">
    <property type="protein sequence ID" value="AAK79646.1"/>
    <property type="molecule type" value="Genomic_DNA"/>
</dbReference>
<dbReference type="PIR" id="C97107">
    <property type="entry name" value="C97107"/>
</dbReference>
<dbReference type="RefSeq" id="NP_348306.1">
    <property type="nucleotide sequence ID" value="NC_003030.1"/>
</dbReference>
<dbReference type="RefSeq" id="WP_010964987.1">
    <property type="nucleotide sequence ID" value="NC_003030.1"/>
</dbReference>
<dbReference type="SMR" id="Q97IG1"/>
<dbReference type="STRING" id="272562.CA_C1680"/>
<dbReference type="KEGG" id="cac:CA_C1680"/>
<dbReference type="PATRIC" id="fig|272562.8.peg.1883"/>
<dbReference type="eggNOG" id="COG0816">
    <property type="taxonomic scope" value="Bacteria"/>
</dbReference>
<dbReference type="HOGENOM" id="CLU_098240_2_0_9"/>
<dbReference type="OrthoDB" id="9796140at2"/>
<dbReference type="Proteomes" id="UP000000814">
    <property type="component" value="Chromosome"/>
</dbReference>
<dbReference type="GO" id="GO:0005829">
    <property type="term" value="C:cytosol"/>
    <property type="evidence" value="ECO:0007669"/>
    <property type="project" value="TreeGrafter"/>
</dbReference>
<dbReference type="GO" id="GO:0004518">
    <property type="term" value="F:nuclease activity"/>
    <property type="evidence" value="ECO:0007669"/>
    <property type="project" value="UniProtKB-KW"/>
</dbReference>
<dbReference type="GO" id="GO:0000967">
    <property type="term" value="P:rRNA 5'-end processing"/>
    <property type="evidence" value="ECO:0007669"/>
    <property type="project" value="UniProtKB-UniRule"/>
</dbReference>
<dbReference type="CDD" id="cd16964">
    <property type="entry name" value="YqgF"/>
    <property type="match status" value="1"/>
</dbReference>
<dbReference type="Gene3D" id="3.30.420.140">
    <property type="entry name" value="YqgF/RNase H-like domain"/>
    <property type="match status" value="1"/>
</dbReference>
<dbReference type="HAMAP" id="MF_00651">
    <property type="entry name" value="Nuclease_YqgF"/>
    <property type="match status" value="1"/>
</dbReference>
<dbReference type="InterPro" id="IPR012337">
    <property type="entry name" value="RNaseH-like_sf"/>
</dbReference>
<dbReference type="InterPro" id="IPR005227">
    <property type="entry name" value="YqgF"/>
</dbReference>
<dbReference type="InterPro" id="IPR006641">
    <property type="entry name" value="YqgF/RNaseH-like_dom"/>
</dbReference>
<dbReference type="InterPro" id="IPR037027">
    <property type="entry name" value="YqgF/RNaseH-like_dom_sf"/>
</dbReference>
<dbReference type="NCBIfam" id="TIGR00250">
    <property type="entry name" value="RNAse_H_YqgF"/>
    <property type="match status" value="1"/>
</dbReference>
<dbReference type="PANTHER" id="PTHR33317">
    <property type="entry name" value="POLYNUCLEOTIDYL TRANSFERASE, RIBONUCLEASE H-LIKE SUPERFAMILY PROTEIN"/>
    <property type="match status" value="1"/>
</dbReference>
<dbReference type="PANTHER" id="PTHR33317:SF4">
    <property type="entry name" value="POLYNUCLEOTIDYL TRANSFERASE, RIBONUCLEASE H-LIKE SUPERFAMILY PROTEIN"/>
    <property type="match status" value="1"/>
</dbReference>
<dbReference type="Pfam" id="PF03652">
    <property type="entry name" value="RuvX"/>
    <property type="match status" value="1"/>
</dbReference>
<dbReference type="SMART" id="SM00732">
    <property type="entry name" value="YqgFc"/>
    <property type="match status" value="1"/>
</dbReference>
<dbReference type="SUPFAM" id="SSF53098">
    <property type="entry name" value="Ribonuclease H-like"/>
    <property type="match status" value="1"/>
</dbReference>
<organism>
    <name type="scientific">Clostridium acetobutylicum (strain ATCC 824 / DSM 792 / JCM 1419 / IAM 19013 / LMG 5710 / NBRC 13948 / NRRL B-527 / VKM B-1787 / 2291 / W)</name>
    <dbReference type="NCBI Taxonomy" id="272562"/>
    <lineage>
        <taxon>Bacteria</taxon>
        <taxon>Bacillati</taxon>
        <taxon>Bacillota</taxon>
        <taxon>Clostridia</taxon>
        <taxon>Eubacteriales</taxon>
        <taxon>Clostridiaceae</taxon>
        <taxon>Clostridium</taxon>
    </lineage>
</organism>
<evidence type="ECO:0000255" key="1">
    <source>
        <dbReference type="HAMAP-Rule" id="MF_00651"/>
    </source>
</evidence>
<proteinExistence type="inferred from homology"/>
<gene>
    <name type="ordered locus">CA_C1680</name>
</gene>
<name>YQGF_CLOAB</name>
<feature type="chain" id="PRO_0000172049" description="Putative pre-16S rRNA nuclease">
    <location>
        <begin position="1"/>
        <end position="135"/>
    </location>
</feature>
<accession>Q97IG1</accession>
<reference key="1">
    <citation type="journal article" date="2001" name="J. Bacteriol.">
        <title>Genome sequence and comparative analysis of the solvent-producing bacterium Clostridium acetobutylicum.</title>
        <authorList>
            <person name="Noelling J."/>
            <person name="Breton G."/>
            <person name="Omelchenko M.V."/>
            <person name="Makarova K.S."/>
            <person name="Zeng Q."/>
            <person name="Gibson R."/>
            <person name="Lee H.M."/>
            <person name="Dubois J."/>
            <person name="Qiu D."/>
            <person name="Hitti J."/>
            <person name="Wolf Y.I."/>
            <person name="Tatusov R.L."/>
            <person name="Sabathe F."/>
            <person name="Doucette-Stamm L.A."/>
            <person name="Soucaille P."/>
            <person name="Daly M.J."/>
            <person name="Bennett G.N."/>
            <person name="Koonin E.V."/>
            <person name="Smith D.R."/>
        </authorList>
    </citation>
    <scope>NUCLEOTIDE SEQUENCE [LARGE SCALE GENOMIC DNA]</scope>
    <source>
        <strain>ATCC 824 / DSM 792 / JCM 1419 / IAM 19013 / LMG 5710 / NBRC 13948 / NRRL B-527 / VKM B-1787 / 2291 / W</strain>
    </source>
</reference>
<sequence length="135" mass="15161">MRILGIDVGNKTIGVALSDPLGFTAQGITTIRRKNEEEDIKELKELCEKYEVDTIVCGLPKNMNGTIGFQSEKVLGFCEVIKQNINVPIKMWDERLTTVTANRAMLEADLSRKKRKKLVDKVAATYILQGYLNSI</sequence>